<proteinExistence type="evidence at protein level"/>
<organism>
    <name type="scientific">Homo sapiens</name>
    <name type="common">Human</name>
    <dbReference type="NCBI Taxonomy" id="9606"/>
    <lineage>
        <taxon>Eukaryota</taxon>
        <taxon>Metazoa</taxon>
        <taxon>Chordata</taxon>
        <taxon>Craniata</taxon>
        <taxon>Vertebrata</taxon>
        <taxon>Euteleostomi</taxon>
        <taxon>Mammalia</taxon>
        <taxon>Eutheria</taxon>
        <taxon>Euarchontoglires</taxon>
        <taxon>Primates</taxon>
        <taxon>Haplorrhini</taxon>
        <taxon>Catarrhini</taxon>
        <taxon>Hominidae</taxon>
        <taxon>Homo</taxon>
    </lineage>
</organism>
<name>MAGAB_HUMAN</name>
<sequence length="429" mass="48129">METQFRRGGLGCSPASIKRKKKREDSGDFGLQVSTMFSEDDFQSTERAPYGPQLQWSQDLPRVQVFREQANLEDRSPRRTQRITGGEQVLWGPITQIFPTVRPADLTRVIMPLEQRSQHCKPEEGLQAQEEDLGLVGAQALQAEEQEAAFFSSTLNVGTLEELPAAESPSPPQSPQEESFSPTAMDAIFGSLSDEGSGSQEKEGPSTSPDLIDPESFSQDILHDKIIDLVHLLLRKYRVKGLITKAEMLGSVIKNYEDYFPEIFREASVCMQLLFGIDVKEVDPTSHSYVLVTSLNLSYDGIQCNEQSMPKSGLLIIVLGVIFMEGNCIPEEVMWEVLSIMGVYAGREHFLFGEPKRLLTQNWVQEKYLVYRQVPGTDPACYEFLWGPRAHAETSKMKVLEYIANANGRDPTSYPSLYEDALREEGEGV</sequence>
<evidence type="ECO:0000255" key="1">
    <source>
        <dbReference type="PROSITE-ProRule" id="PRU00127"/>
    </source>
</evidence>
<evidence type="ECO:0000256" key="2">
    <source>
        <dbReference type="SAM" id="MobiDB-lite"/>
    </source>
</evidence>
<evidence type="ECO:0000269" key="3">
    <source>
    </source>
</evidence>
<evidence type="ECO:0000269" key="4">
    <source>
    </source>
</evidence>
<evidence type="ECO:0000303" key="5">
    <source>
    </source>
</evidence>
<evidence type="ECO:0000303" key="6">
    <source>
    </source>
</evidence>
<evidence type="ECO:0000305" key="7"/>
<evidence type="ECO:0000312" key="8">
    <source>
        <dbReference type="HGNC" id="HGNC:6798"/>
    </source>
</evidence>
<evidence type="ECO:0007829" key="9">
    <source>
        <dbReference type="PDB" id="6WJH"/>
    </source>
</evidence>
<reference key="1">
    <citation type="journal article" date="1994" name="Immunogenetics">
        <title>Structure, chromosomal localization, and expression of 12 genes of the MAGE family.</title>
        <authorList>
            <person name="De Plaen E."/>
            <person name="Arden K."/>
            <person name="Traversari C."/>
            <person name="Gaforio J.J."/>
            <person name="Szikora J.-P."/>
            <person name="De Smet C."/>
            <person name="Brasseur F."/>
            <person name="van der Bruggen P."/>
            <person name="Lethe B.G."/>
            <person name="Lurquin C."/>
            <person name="Brasseur R."/>
            <person name="Chomez P."/>
            <person name="de Backer O."/>
            <person name="Cavenee W."/>
            <person name="Boon T."/>
        </authorList>
    </citation>
    <scope>NUCLEOTIDE SEQUENCE [GENOMIC DNA]</scope>
</reference>
<reference key="2">
    <citation type="journal article" date="2005" name="Mol. Cell. Biol.">
        <title>Melanoma antigen gene protein MAGE-11 regulates androgen receptor function by modulating the interdomain interaction.</title>
        <authorList>
            <person name="Bai S."/>
            <person name="He B."/>
            <person name="Wilson E.M."/>
        </authorList>
    </citation>
    <scope>NUCLEOTIDE SEQUENCE [MRNA] (ISOFORM 1)</scope>
    <scope>FUNCTION</scope>
    <scope>TISSUE SPECIFICITY</scope>
    <scope>SUBCELLULAR LOCATION</scope>
    <source>
        <tissue>Testis</tissue>
    </source>
</reference>
<reference key="3">
    <citation type="journal article" date="2004" name="Nat. Genet.">
        <title>Complete sequencing and characterization of 21,243 full-length human cDNAs.</title>
        <authorList>
            <person name="Ota T."/>
            <person name="Suzuki Y."/>
            <person name="Nishikawa T."/>
            <person name="Otsuki T."/>
            <person name="Sugiyama T."/>
            <person name="Irie R."/>
            <person name="Wakamatsu A."/>
            <person name="Hayashi K."/>
            <person name="Sato H."/>
            <person name="Nagai K."/>
            <person name="Kimura K."/>
            <person name="Makita H."/>
            <person name="Sekine M."/>
            <person name="Obayashi M."/>
            <person name="Nishi T."/>
            <person name="Shibahara T."/>
            <person name="Tanaka T."/>
            <person name="Ishii S."/>
            <person name="Yamamoto J."/>
            <person name="Saito K."/>
            <person name="Kawai Y."/>
            <person name="Isono Y."/>
            <person name="Nakamura Y."/>
            <person name="Nagahari K."/>
            <person name="Murakami K."/>
            <person name="Yasuda T."/>
            <person name="Iwayanagi T."/>
            <person name="Wagatsuma M."/>
            <person name="Shiratori A."/>
            <person name="Sudo H."/>
            <person name="Hosoiri T."/>
            <person name="Kaku Y."/>
            <person name="Kodaira H."/>
            <person name="Kondo H."/>
            <person name="Sugawara M."/>
            <person name="Takahashi M."/>
            <person name="Kanda K."/>
            <person name="Yokoi T."/>
            <person name="Furuya T."/>
            <person name="Kikkawa E."/>
            <person name="Omura Y."/>
            <person name="Abe K."/>
            <person name="Kamihara K."/>
            <person name="Katsuta N."/>
            <person name="Sato K."/>
            <person name="Tanikawa M."/>
            <person name="Yamazaki M."/>
            <person name="Ninomiya K."/>
            <person name="Ishibashi T."/>
            <person name="Yamashita H."/>
            <person name="Murakawa K."/>
            <person name="Fujimori K."/>
            <person name="Tanai H."/>
            <person name="Kimata M."/>
            <person name="Watanabe M."/>
            <person name="Hiraoka S."/>
            <person name="Chiba Y."/>
            <person name="Ishida S."/>
            <person name="Ono Y."/>
            <person name="Takiguchi S."/>
            <person name="Watanabe S."/>
            <person name="Yosida M."/>
            <person name="Hotuta T."/>
            <person name="Kusano J."/>
            <person name="Kanehori K."/>
            <person name="Takahashi-Fujii A."/>
            <person name="Hara H."/>
            <person name="Tanase T.-O."/>
            <person name="Nomura Y."/>
            <person name="Togiya S."/>
            <person name="Komai F."/>
            <person name="Hara R."/>
            <person name="Takeuchi K."/>
            <person name="Arita M."/>
            <person name="Imose N."/>
            <person name="Musashino K."/>
            <person name="Yuuki H."/>
            <person name="Oshima A."/>
            <person name="Sasaki N."/>
            <person name="Aotsuka S."/>
            <person name="Yoshikawa Y."/>
            <person name="Matsunawa H."/>
            <person name="Ichihara T."/>
            <person name="Shiohata N."/>
            <person name="Sano S."/>
            <person name="Moriya S."/>
            <person name="Momiyama H."/>
            <person name="Satoh N."/>
            <person name="Takami S."/>
            <person name="Terashima Y."/>
            <person name="Suzuki O."/>
            <person name="Nakagawa S."/>
            <person name="Senoh A."/>
            <person name="Mizoguchi H."/>
            <person name="Goto Y."/>
            <person name="Shimizu F."/>
            <person name="Wakebe H."/>
            <person name="Hishigaki H."/>
            <person name="Watanabe T."/>
            <person name="Sugiyama A."/>
            <person name="Takemoto M."/>
            <person name="Kawakami B."/>
            <person name="Yamazaki M."/>
            <person name="Watanabe K."/>
            <person name="Kumagai A."/>
            <person name="Itakura S."/>
            <person name="Fukuzumi Y."/>
            <person name="Fujimori Y."/>
            <person name="Komiyama M."/>
            <person name="Tashiro H."/>
            <person name="Tanigami A."/>
            <person name="Fujiwara T."/>
            <person name="Ono T."/>
            <person name="Yamada K."/>
            <person name="Fujii Y."/>
            <person name="Ozaki K."/>
            <person name="Hirao M."/>
            <person name="Ohmori Y."/>
            <person name="Kawabata A."/>
            <person name="Hikiji T."/>
            <person name="Kobatake N."/>
            <person name="Inagaki H."/>
            <person name="Ikema Y."/>
            <person name="Okamoto S."/>
            <person name="Okitani R."/>
            <person name="Kawakami T."/>
            <person name="Noguchi S."/>
            <person name="Itoh T."/>
            <person name="Shigeta K."/>
            <person name="Senba T."/>
            <person name="Matsumura K."/>
            <person name="Nakajima Y."/>
            <person name="Mizuno T."/>
            <person name="Morinaga M."/>
            <person name="Sasaki M."/>
            <person name="Togashi T."/>
            <person name="Oyama M."/>
            <person name="Hata H."/>
            <person name="Watanabe M."/>
            <person name="Komatsu T."/>
            <person name="Mizushima-Sugano J."/>
            <person name="Satoh T."/>
            <person name="Shirai Y."/>
            <person name="Takahashi Y."/>
            <person name="Nakagawa K."/>
            <person name="Okumura K."/>
            <person name="Nagase T."/>
            <person name="Nomura N."/>
            <person name="Kikuchi H."/>
            <person name="Masuho Y."/>
            <person name="Yamashita R."/>
            <person name="Nakai K."/>
            <person name="Yada T."/>
            <person name="Nakamura Y."/>
            <person name="Ohara O."/>
            <person name="Isogai T."/>
            <person name="Sugano S."/>
        </authorList>
    </citation>
    <scope>NUCLEOTIDE SEQUENCE [LARGE SCALE MRNA] (ISOFORM 2)</scope>
    <source>
        <tissue>Placenta</tissue>
    </source>
</reference>
<reference key="4">
    <citation type="journal article" date="2004" name="Genome Res.">
        <title>The status, quality, and expansion of the NIH full-length cDNA project: the Mammalian Gene Collection (MGC).</title>
        <authorList>
            <consortium name="The MGC Project Team"/>
        </authorList>
    </citation>
    <scope>NUCLEOTIDE SEQUENCE [LARGE SCALE MRNA] (ISOFORM 1)</scope>
    <source>
        <tissue>Skin</tissue>
    </source>
</reference>
<reference key="5">
    <citation type="journal article" date="2018" name="Mol. Psychiatry">
        <title>Mapping autosomal recessive intellectual disability: combined microarray and exome sequencing identifies 26 novel candidate genes in 192 consanguineous families.</title>
        <authorList>
            <person name="Harripaul R."/>
            <person name="Vasli N."/>
            <person name="Mikhailov A."/>
            <person name="Rafiq M.A."/>
            <person name="Mittal K."/>
            <person name="Windpassinger C."/>
            <person name="Sheikh T.I."/>
            <person name="Noor A."/>
            <person name="Mahmood H."/>
            <person name="Downey S."/>
            <person name="Johnson M."/>
            <person name="Vleuten K."/>
            <person name="Bell L."/>
            <person name="Ilyas M."/>
            <person name="Khan F.S."/>
            <person name="Khan V."/>
            <person name="Moradi M."/>
            <person name="Ayaz M."/>
            <person name="Naeem F."/>
            <person name="Heidari A."/>
            <person name="Ahmed I."/>
            <person name="Ghadami S."/>
            <person name="Agha Z."/>
            <person name="Zeinali S."/>
            <person name="Qamar R."/>
            <person name="Mozhdehipanah H."/>
            <person name="John P."/>
            <person name="Mir A."/>
            <person name="Ansar M."/>
            <person name="French L."/>
            <person name="Ayub M."/>
            <person name="Vincent J.B."/>
        </authorList>
    </citation>
    <scope>VARIANT PRO-57</scope>
</reference>
<dbReference type="EMBL" id="U10686">
    <property type="protein sequence ID" value="AAA68870.1"/>
    <property type="status" value="ALT_SEQ"/>
    <property type="molecule type" value="Genomic_DNA"/>
</dbReference>
<dbReference type="EMBL" id="AY747607">
    <property type="protein sequence ID" value="AAW71787.1"/>
    <property type="molecule type" value="mRNA"/>
</dbReference>
<dbReference type="EMBL" id="AK127849">
    <property type="protein sequence ID" value="BAC87161.1"/>
    <property type="molecule type" value="mRNA"/>
</dbReference>
<dbReference type="EMBL" id="BC004479">
    <property type="protein sequence ID" value="AAH04479.2"/>
    <property type="molecule type" value="mRNA"/>
</dbReference>
<dbReference type="CCDS" id="CCDS48180.1">
    <molecule id="P43364-1"/>
</dbReference>
<dbReference type="PIR" id="I38660">
    <property type="entry name" value="I38660"/>
</dbReference>
<dbReference type="RefSeq" id="NP_001011544.1">
    <property type="nucleotide sequence ID" value="NM_001011544.1"/>
</dbReference>
<dbReference type="RefSeq" id="NP_005357.2">
    <molecule id="P43364-1"/>
    <property type="nucleotide sequence ID" value="NM_005366.5"/>
</dbReference>
<dbReference type="RefSeq" id="XP_016885010.1">
    <property type="nucleotide sequence ID" value="XM_017029521.1"/>
</dbReference>
<dbReference type="RefSeq" id="XP_016885011.1">
    <property type="nucleotide sequence ID" value="XM_017029522.1"/>
</dbReference>
<dbReference type="RefSeq" id="XP_047298062.1">
    <molecule id="P43364-1"/>
    <property type="nucleotide sequence ID" value="XM_047442106.1"/>
</dbReference>
<dbReference type="RefSeq" id="XP_054183039.1">
    <molecule id="P43364-1"/>
    <property type="nucleotide sequence ID" value="XM_054327064.1"/>
</dbReference>
<dbReference type="PDB" id="6WJH">
    <property type="method" value="X-ray"/>
    <property type="resolution" value="2.19 A"/>
    <property type="chains" value="A/B/C/D=218-429"/>
</dbReference>
<dbReference type="PDBsum" id="6WJH"/>
<dbReference type="SMR" id="P43364"/>
<dbReference type="BioGRID" id="110284">
    <property type="interactions" value="146"/>
</dbReference>
<dbReference type="CORUM" id="P43364"/>
<dbReference type="FunCoup" id="P43364">
    <property type="interactions" value="57"/>
</dbReference>
<dbReference type="IntAct" id="P43364">
    <property type="interactions" value="115"/>
</dbReference>
<dbReference type="MINT" id="P43364"/>
<dbReference type="STRING" id="9606.ENSP00000347358"/>
<dbReference type="MoonDB" id="P43364">
    <property type="type" value="Predicted"/>
</dbReference>
<dbReference type="iPTMnet" id="P43364"/>
<dbReference type="PhosphoSitePlus" id="P43364"/>
<dbReference type="BioMuta" id="MAGEA11"/>
<dbReference type="DMDM" id="97536722"/>
<dbReference type="MassIVE" id="P43364"/>
<dbReference type="PaxDb" id="9606-ENSP00000347358"/>
<dbReference type="PeptideAtlas" id="P43364"/>
<dbReference type="ProteomicsDB" id="55626">
    <molecule id="P43364-1"/>
</dbReference>
<dbReference type="ProteomicsDB" id="55627">
    <molecule id="P43364-2"/>
</dbReference>
<dbReference type="TopDownProteomics" id="P43364-1">
    <molecule id="P43364-1"/>
</dbReference>
<dbReference type="Antibodypedia" id="30628">
    <property type="antibodies" value="227 antibodies from 31 providers"/>
</dbReference>
<dbReference type="DNASU" id="4110"/>
<dbReference type="Ensembl" id="ENST00000355220.6">
    <molecule id="P43364-1"/>
    <property type="protein sequence ID" value="ENSP00000347358.5"/>
    <property type="gene ID" value="ENSG00000185247.15"/>
</dbReference>
<dbReference type="GeneID" id="4110"/>
<dbReference type="KEGG" id="hsa:4110"/>
<dbReference type="MANE-Select" id="ENST00000355220.6">
    <property type="protein sequence ID" value="ENSP00000347358.5"/>
    <property type="RefSeq nucleotide sequence ID" value="NM_005366.5"/>
    <property type="RefSeq protein sequence ID" value="NP_005357.2"/>
</dbReference>
<dbReference type="UCSC" id="uc004fdq.4">
    <molecule id="P43364-1"/>
    <property type="organism name" value="human"/>
</dbReference>
<dbReference type="AGR" id="HGNC:6798"/>
<dbReference type="CTD" id="4110"/>
<dbReference type="DisGeNET" id="4110"/>
<dbReference type="GeneCards" id="MAGEA11"/>
<dbReference type="HGNC" id="HGNC:6798">
    <property type="gene designation" value="MAGEA11"/>
</dbReference>
<dbReference type="HPA" id="ENSG00000185247">
    <property type="expression patterns" value="Tissue enriched (epididymis)"/>
</dbReference>
<dbReference type="MIM" id="300344">
    <property type="type" value="gene"/>
</dbReference>
<dbReference type="neXtProt" id="NX_P43364"/>
<dbReference type="OpenTargets" id="ENSG00000185247"/>
<dbReference type="PharmGKB" id="PA30544"/>
<dbReference type="VEuPathDB" id="HostDB:ENSG00000185247"/>
<dbReference type="eggNOG" id="KOG4562">
    <property type="taxonomic scope" value="Eukaryota"/>
</dbReference>
<dbReference type="GeneTree" id="ENSGT00940000164167"/>
<dbReference type="InParanoid" id="P43364"/>
<dbReference type="OMA" id="REASECT"/>
<dbReference type="OrthoDB" id="9480659at2759"/>
<dbReference type="PAN-GO" id="P43364">
    <property type="GO annotations" value="3 GO annotations based on evolutionary models"/>
</dbReference>
<dbReference type="PhylomeDB" id="P43364"/>
<dbReference type="TreeFam" id="TF328505"/>
<dbReference type="PathwayCommons" id="P43364"/>
<dbReference type="SignaLink" id="P43364"/>
<dbReference type="SIGNOR" id="P43364"/>
<dbReference type="BioGRID-ORCS" id="4110">
    <property type="hits" value="12 hits in 767 CRISPR screens"/>
</dbReference>
<dbReference type="GeneWiki" id="MAGEA11"/>
<dbReference type="GenomeRNAi" id="4110"/>
<dbReference type="Pharos" id="P43364">
    <property type="development level" value="Tbio"/>
</dbReference>
<dbReference type="PRO" id="PR:P43364"/>
<dbReference type="Proteomes" id="UP000005640">
    <property type="component" value="Chromosome X"/>
</dbReference>
<dbReference type="RNAct" id="P43364">
    <property type="molecule type" value="protein"/>
</dbReference>
<dbReference type="Bgee" id="ENSG00000185247">
    <property type="expression patterns" value="Expressed in corpus epididymis and 30 other cell types or tissues"/>
</dbReference>
<dbReference type="ExpressionAtlas" id="P43364">
    <property type="expression patterns" value="baseline and differential"/>
</dbReference>
<dbReference type="GO" id="GO:0005829">
    <property type="term" value="C:cytosol"/>
    <property type="evidence" value="ECO:0000314"/>
    <property type="project" value="HPA"/>
</dbReference>
<dbReference type="GO" id="GO:0016604">
    <property type="term" value="C:nuclear body"/>
    <property type="evidence" value="ECO:0000314"/>
    <property type="project" value="HPA"/>
</dbReference>
<dbReference type="GO" id="GO:0005654">
    <property type="term" value="C:nucleoplasm"/>
    <property type="evidence" value="ECO:0000314"/>
    <property type="project" value="HPA"/>
</dbReference>
<dbReference type="GO" id="GO:0005634">
    <property type="term" value="C:nucleus"/>
    <property type="evidence" value="ECO:0000318"/>
    <property type="project" value="GO_Central"/>
</dbReference>
<dbReference type="GO" id="GO:0042826">
    <property type="term" value="F:histone deacetylase binding"/>
    <property type="evidence" value="ECO:0000318"/>
    <property type="project" value="GO_Central"/>
</dbReference>
<dbReference type="GO" id="GO:0000122">
    <property type="term" value="P:negative regulation of transcription by RNA polymerase II"/>
    <property type="evidence" value="ECO:0000318"/>
    <property type="project" value="GO_Central"/>
</dbReference>
<dbReference type="FunFam" id="1.10.10.1200:FF:000002">
    <property type="entry name" value="MAGE family member A11"/>
    <property type="match status" value="1"/>
</dbReference>
<dbReference type="FunFam" id="1.10.10.1210:FF:000001">
    <property type="entry name" value="melanoma-associated antigen D1"/>
    <property type="match status" value="1"/>
</dbReference>
<dbReference type="Gene3D" id="1.10.10.1200">
    <property type="entry name" value="MAGE homology domain, winged helix WH1 motif"/>
    <property type="match status" value="1"/>
</dbReference>
<dbReference type="Gene3D" id="1.10.10.1210">
    <property type="entry name" value="MAGE homology domain, winged helix WH2 motif"/>
    <property type="match status" value="1"/>
</dbReference>
<dbReference type="InterPro" id="IPR037445">
    <property type="entry name" value="MAGE"/>
</dbReference>
<dbReference type="InterPro" id="IPR021072">
    <property type="entry name" value="MAGE_N"/>
</dbReference>
<dbReference type="InterPro" id="IPR041898">
    <property type="entry name" value="MAGE_WH1"/>
</dbReference>
<dbReference type="InterPro" id="IPR041899">
    <property type="entry name" value="MAGE_WH2"/>
</dbReference>
<dbReference type="InterPro" id="IPR002190">
    <property type="entry name" value="MHD_dom"/>
</dbReference>
<dbReference type="PANTHER" id="PTHR11736:SF146">
    <property type="entry name" value="MELANOMA-ASSOCIATED ANTIGEN 11"/>
    <property type="match status" value="1"/>
</dbReference>
<dbReference type="PANTHER" id="PTHR11736">
    <property type="entry name" value="MELANOMA-ASSOCIATED ANTIGEN MAGE ANTIGEN"/>
    <property type="match status" value="1"/>
</dbReference>
<dbReference type="Pfam" id="PF01454">
    <property type="entry name" value="MAGE"/>
    <property type="match status" value="1"/>
</dbReference>
<dbReference type="Pfam" id="PF12440">
    <property type="entry name" value="MAGE_N"/>
    <property type="match status" value="1"/>
</dbReference>
<dbReference type="SMART" id="SM01373">
    <property type="entry name" value="MAGE"/>
    <property type="match status" value="1"/>
</dbReference>
<dbReference type="SMART" id="SM01392">
    <property type="entry name" value="MAGE_N"/>
    <property type="match status" value="1"/>
</dbReference>
<dbReference type="PROSITE" id="PS50838">
    <property type="entry name" value="MAGE"/>
    <property type="match status" value="1"/>
</dbReference>
<keyword id="KW-0002">3D-structure</keyword>
<keyword id="KW-0025">Alternative splicing</keyword>
<keyword id="KW-0963">Cytoplasm</keyword>
<keyword id="KW-0539">Nucleus</keyword>
<keyword id="KW-1267">Proteomics identification</keyword>
<keyword id="KW-1185">Reference proteome</keyword>
<keyword id="KW-0825">Tumor antigen</keyword>
<feature type="chain" id="PRO_0000156710" description="Melanoma-associated antigen 11">
    <location>
        <begin position="1"/>
        <end position="429"/>
    </location>
</feature>
<feature type="domain" description="MAGE" evidence="1">
    <location>
        <begin position="222"/>
        <end position="421"/>
    </location>
</feature>
<feature type="region of interest" description="Disordered" evidence="2">
    <location>
        <begin position="1"/>
        <end position="30"/>
    </location>
</feature>
<feature type="region of interest" description="Disordered" evidence="2">
    <location>
        <begin position="188"/>
        <end position="215"/>
    </location>
</feature>
<feature type="compositionally biased region" description="Polar residues" evidence="2">
    <location>
        <begin position="194"/>
        <end position="209"/>
    </location>
</feature>
<feature type="splice variant" id="VSP_018576" description="In isoform 2." evidence="5">
    <location>
        <begin position="1"/>
        <end position="35"/>
    </location>
</feature>
<feature type="sequence variant" id="VAR_080775" description="Found in a family with intellectual disability; uncertain significance; dbSNP:rs1557362265." evidence="4">
    <original>S</original>
    <variation>P</variation>
    <location>
        <position position="57"/>
    </location>
</feature>
<feature type="sequence variant" id="VAR_053497" description="In dbSNP:rs2233049.">
    <original>S</original>
    <variation>R</variation>
    <location>
        <position position="191"/>
    </location>
</feature>
<feature type="helix" evidence="9">
    <location>
        <begin position="221"/>
        <end position="238"/>
    </location>
</feature>
<feature type="helix" evidence="9">
    <location>
        <begin position="245"/>
        <end position="251"/>
    </location>
</feature>
<feature type="helix" evidence="9">
    <location>
        <begin position="254"/>
        <end position="259"/>
    </location>
</feature>
<feature type="helix" evidence="9">
    <location>
        <begin position="260"/>
        <end position="275"/>
    </location>
</feature>
<feature type="strand" evidence="9">
    <location>
        <begin position="277"/>
        <end position="283"/>
    </location>
</feature>
<feature type="turn" evidence="9">
    <location>
        <begin position="284"/>
        <end position="287"/>
    </location>
</feature>
<feature type="strand" evidence="9">
    <location>
        <begin position="288"/>
        <end position="293"/>
    </location>
</feature>
<feature type="helix" evidence="9">
    <location>
        <begin position="294"/>
        <end position="296"/>
    </location>
</feature>
<feature type="helix" evidence="9">
    <location>
        <begin position="312"/>
        <end position="324"/>
    </location>
</feature>
<feature type="helix" evidence="9">
    <location>
        <begin position="331"/>
        <end position="338"/>
    </location>
</feature>
<feature type="helix" evidence="9">
    <location>
        <begin position="339"/>
        <end position="341"/>
    </location>
</feature>
<feature type="turn" evidence="9">
    <location>
        <begin position="350"/>
        <end position="352"/>
    </location>
</feature>
<feature type="helix" evidence="9">
    <location>
        <begin position="355"/>
        <end position="360"/>
    </location>
</feature>
<feature type="helix" evidence="9">
    <location>
        <begin position="362"/>
        <end position="365"/>
    </location>
</feature>
<feature type="strand" evidence="9">
    <location>
        <begin position="368"/>
        <end position="373"/>
    </location>
</feature>
<feature type="strand" evidence="9">
    <location>
        <begin position="382"/>
        <end position="386"/>
    </location>
</feature>
<feature type="helix" evidence="9">
    <location>
        <begin position="388"/>
        <end position="393"/>
    </location>
</feature>
<feature type="helix" evidence="9">
    <location>
        <begin position="396"/>
        <end position="406"/>
    </location>
</feature>
<feature type="helix" evidence="9">
    <location>
        <begin position="411"/>
        <end position="413"/>
    </location>
</feature>
<feature type="helix" evidence="9">
    <location>
        <begin position="415"/>
        <end position="422"/>
    </location>
</feature>
<accession>P43364</accession>
<accession>Q5ETU4</accession>
<accession>Q6ZRZ5</accession>
<gene>
    <name evidence="6 8" type="primary">MAGEA11</name>
    <name type="synonym">MAGE11</name>
</gene>
<comment type="function">
    <text evidence="3">Acts as androgen receptor coregulator that increases androgen receptor activity by modulating the receptors interdomain interaction. May play a role in embryonal development and tumor transformation or aspects of tumor progression.</text>
</comment>
<comment type="interaction">
    <interactant intactId="EBI-739552">
        <id>P43364</id>
    </interactant>
    <interactant intactId="EBI-2880280">
        <id>Q68CK6</id>
        <label>ACSM2B</label>
    </interactant>
    <organismsDiffer>false</organismsDiffer>
    <experiments>3</experiments>
</comment>
<comment type="interaction">
    <interactant intactId="EBI-739552">
        <id>P43364</id>
    </interactant>
    <interactant intactId="EBI-714754">
        <id>O95696</id>
        <label>BRD1</label>
    </interactant>
    <organismsDiffer>false</organismsDiffer>
    <experiments>3</experiments>
</comment>
<comment type="interaction">
    <interactant intactId="EBI-739552">
        <id>P43364</id>
    </interactant>
    <interactant intactId="EBI-7317823">
        <id>Q6P5X5</id>
        <label>C22orf39</label>
    </interactant>
    <organismsDiffer>false</organismsDiffer>
    <experiments>3</experiments>
</comment>
<comment type="interaction">
    <interactant intactId="EBI-739552">
        <id>P43364</id>
    </interactant>
    <interactant intactId="EBI-523958">
        <id>P55210</id>
        <label>CASP7</label>
    </interactant>
    <organismsDiffer>false</organismsDiffer>
    <experiments>3</experiments>
</comment>
<comment type="interaction">
    <interactant intactId="EBI-739552">
        <id>P43364</id>
    </interactant>
    <interactant intactId="EBI-3893101">
        <id>Q969G5</id>
        <label>CAVIN3</label>
    </interactant>
    <organismsDiffer>false</organismsDiffer>
    <experiments>3</experiments>
</comment>
<comment type="interaction">
    <interactant intactId="EBI-739552">
        <id>P43364</id>
    </interactant>
    <interactant intactId="EBI-711501">
        <id>Q9BWC9</id>
        <label>CCDC106</label>
    </interactant>
    <organismsDiffer>false</organismsDiffer>
    <experiments>3</experiments>
</comment>
<comment type="interaction">
    <interactant intactId="EBI-739552">
        <id>P43364</id>
    </interactant>
    <interactant intactId="EBI-12105646">
        <id>Q49A88-3</id>
        <label>CCDC14</label>
    </interactant>
    <organismsDiffer>false</organismsDiffer>
    <experiments>3</experiments>
</comment>
<comment type="interaction">
    <interactant intactId="EBI-739552">
        <id>P43364</id>
    </interactant>
    <interactant intactId="EBI-10749669">
        <id>Q8IYE0</id>
        <label>CCDC146</label>
    </interactant>
    <organismsDiffer>false</organismsDiffer>
    <experiments>3</experiments>
</comment>
<comment type="interaction">
    <interactant intactId="EBI-739552">
        <id>P43364</id>
    </interactant>
    <interactant intactId="EBI-12314269">
        <id>Q2M243</id>
        <label>CCDC27</label>
    </interactant>
    <organismsDiffer>false</organismsDiffer>
    <experiments>3</experiments>
</comment>
<comment type="interaction">
    <interactant intactId="EBI-739552">
        <id>P43364</id>
    </interactant>
    <interactant intactId="EBI-711280">
        <id>P42772</id>
        <label>CDKN2B</label>
    </interactant>
    <organismsDiffer>false</organismsDiffer>
    <experiments>4</experiments>
</comment>
<comment type="interaction">
    <interactant intactId="EBI-739552">
        <id>P43364</id>
    </interactant>
    <interactant intactId="EBI-739780">
        <id>Q96AJ1</id>
        <label>CLUAP1</label>
    </interactant>
    <organismsDiffer>false</organismsDiffer>
    <experiments>5</experiments>
</comment>
<comment type="interaction">
    <interactant intactId="EBI-739552">
        <id>P43364</id>
    </interactant>
    <interactant intactId="EBI-1046676">
        <id>P31146</id>
        <label>CORO1A</label>
    </interactant>
    <organismsDiffer>false</organismsDiffer>
    <experiments>3</experiments>
</comment>
<comment type="interaction">
    <interactant intactId="EBI-739552">
        <id>P43364</id>
    </interactant>
    <interactant intactId="EBI-1774260">
        <id>Q8WZ74</id>
        <label>CTTNBP2</label>
    </interactant>
    <organismsDiffer>false</organismsDiffer>
    <experiments>3</experiments>
</comment>
<comment type="interaction">
    <interactant intactId="EBI-739552">
        <id>P43364</id>
    </interactant>
    <interactant intactId="EBI-11961832">
        <id>Q6IS01</id>
        <label>DLGAP1</label>
    </interactant>
    <organismsDiffer>false</organismsDiffer>
    <experiments>3</experiments>
</comment>
<comment type="interaction">
    <interactant intactId="EBI-739552">
        <id>P43364</id>
    </interactant>
    <interactant intactId="EBI-748520">
        <id>Q96BY6</id>
        <label>DOCK10</label>
    </interactant>
    <organismsDiffer>false</organismsDiffer>
    <experiments>3</experiments>
</comment>
<comment type="interaction">
    <interactant intactId="EBI-739552">
        <id>P43364</id>
    </interactant>
    <interactant intactId="EBI-719941">
        <id>Q3B820</id>
        <label>FAM161A</label>
    </interactant>
    <organismsDiffer>false</organismsDiffer>
    <experiments>3</experiments>
</comment>
<comment type="interaction">
    <interactant intactId="EBI-739552">
        <id>P43364</id>
    </interactant>
    <interactant intactId="EBI-372506">
        <id>Q8TAE8</id>
        <label>GADD45GIP1</label>
    </interactant>
    <organismsDiffer>false</organismsDiffer>
    <experiments>3</experiments>
</comment>
<comment type="interaction">
    <interactant intactId="EBI-739552">
        <id>P43364</id>
    </interactant>
    <interactant intactId="EBI-715444">
        <id>P23434</id>
        <label>GCSH</label>
    </interactant>
    <organismsDiffer>false</organismsDiffer>
    <experiments>3</experiments>
</comment>
<comment type="interaction">
    <interactant intactId="EBI-739552">
        <id>P43364</id>
    </interactant>
    <interactant intactId="EBI-3893317">
        <id>P09067</id>
        <label>HOXB5</label>
    </interactant>
    <organismsDiffer>false</organismsDiffer>
    <experiments>3</experiments>
</comment>
<comment type="interaction">
    <interactant intactId="EBI-739552">
        <id>P43364</id>
    </interactant>
    <interactant intactId="EBI-2831730">
        <id>Q8TCB0</id>
        <label>IFI44</label>
    </interactant>
    <organismsDiffer>false</organismsDiffer>
    <experiments>3</experiments>
</comment>
<comment type="interaction">
    <interactant intactId="EBI-739552">
        <id>P43364</id>
    </interactant>
    <interactant intactId="EBI-751694">
        <id>P20809</id>
        <label>IL11</label>
    </interactant>
    <organismsDiffer>false</organismsDiffer>
    <experiments>4</experiments>
</comment>
<comment type="interaction">
    <interactant intactId="EBI-739552">
        <id>P43364</id>
    </interactant>
    <interactant intactId="EBI-1030834">
        <id>P40189</id>
        <label>IL6ST</label>
    </interactant>
    <organismsDiffer>false</organismsDiffer>
    <experiments>3</experiments>
</comment>
<comment type="interaction">
    <interactant intactId="EBI-739552">
        <id>P43364</id>
    </interactant>
    <interactant intactId="EBI-10278909">
        <id>Q92613</id>
        <label>JADE3</label>
    </interactant>
    <organismsDiffer>false</organismsDiffer>
    <experiments>4</experiments>
</comment>
<comment type="interaction">
    <interactant intactId="EBI-739552">
        <id>P43364</id>
    </interactant>
    <interactant intactId="EBI-749878">
        <id>Q8IYD9</id>
        <label>LAS2</label>
    </interactant>
    <organismsDiffer>false</organismsDiffer>
    <experiments>4</experiments>
</comment>
<comment type="interaction">
    <interactant intactId="EBI-739552">
        <id>P43364</id>
    </interactant>
    <interactant intactId="EBI-16434477">
        <id>A0A0S2Z5F8</id>
        <label>LMBR1L</label>
    </interactant>
    <organismsDiffer>false</organismsDiffer>
    <experiments>3</experiments>
</comment>
<comment type="interaction">
    <interactant intactId="EBI-739552">
        <id>P43364</id>
    </interactant>
    <interactant intactId="EBI-721328">
        <id>P58340</id>
        <label>MLF1</label>
    </interactant>
    <organismsDiffer>false</organismsDiffer>
    <experiments>5</experiments>
</comment>
<comment type="interaction">
    <interactant intactId="EBI-739552">
        <id>P43364</id>
    </interactant>
    <interactant intactId="EBI-713654">
        <id>Q9Y6M9</id>
        <label>NDUFB9</label>
    </interactant>
    <organismsDiffer>false</organismsDiffer>
    <experiments>4</experiments>
</comment>
<comment type="interaction">
    <interactant intactId="EBI-739552">
        <id>P43364</id>
    </interactant>
    <interactant intactId="EBI-10190763">
        <id>O94818-2</id>
        <label>NOL4</label>
    </interactant>
    <organismsDiffer>false</organismsDiffer>
    <experiments>3</experiments>
</comment>
<comment type="interaction">
    <interactant intactId="EBI-739552">
        <id>P43364</id>
    </interactant>
    <interactant intactId="EBI-741158">
        <id>Q96HA8</id>
        <label>NTAQ1</label>
    </interactant>
    <organismsDiffer>false</organismsDiffer>
    <experiments>3</experiments>
</comment>
<comment type="interaction">
    <interactant intactId="EBI-739552">
        <id>P43364</id>
    </interactant>
    <interactant intactId="EBI-634289">
        <id>Q9H0N5</id>
        <label>PCBD2</label>
    </interactant>
    <organismsDiffer>false</organismsDiffer>
    <experiments>3</experiments>
</comment>
<comment type="interaction">
    <interactant intactId="EBI-739552">
        <id>P43364</id>
    </interactant>
    <interactant intactId="EBI-721853">
        <id>O14832</id>
        <label>PHYH</label>
    </interactant>
    <organismsDiffer>false</organismsDiffer>
    <experiments>4</experiments>
</comment>
<comment type="interaction">
    <interactant intactId="EBI-739552">
        <id>P43364</id>
    </interactant>
    <interactant intactId="EBI-10285708">
        <id>Q96FE7</id>
        <label>PIK3IP1</label>
    </interactant>
    <organismsDiffer>false</organismsDiffer>
    <experiments>3</experiments>
</comment>
<comment type="interaction">
    <interactant intactId="EBI-739552">
        <id>P43364</id>
    </interactant>
    <interactant intactId="EBI-11749201">
        <id>Q9Y237-2</id>
        <label>PIN4</label>
    </interactant>
    <organismsDiffer>false</organismsDiffer>
    <experiments>3</experiments>
</comment>
<comment type="interaction">
    <interactant intactId="EBI-739552">
        <id>P43364</id>
    </interactant>
    <interactant intactId="EBI-12105500">
        <id>Q63HM9</id>
        <label>PLCXD3</label>
    </interactant>
    <organismsDiffer>false</organismsDiffer>
    <experiments>3</experiments>
</comment>
<comment type="interaction">
    <interactant intactId="EBI-739552">
        <id>P43364</id>
    </interactant>
    <interactant intactId="EBI-5544229">
        <id>P30405</id>
        <label>PPIF</label>
    </interactant>
    <organismsDiffer>false</organismsDiffer>
    <experiments>3</experiments>
</comment>
<comment type="interaction">
    <interactant intactId="EBI-739552">
        <id>P43364</id>
    </interactant>
    <interactant intactId="EBI-3923368">
        <id>Q8N3J5</id>
        <label>PPM1K</label>
    </interactant>
    <organismsDiffer>false</organismsDiffer>
    <experiments>3</experiments>
</comment>
<comment type="interaction">
    <interactant intactId="EBI-739552">
        <id>P43364</id>
    </interactant>
    <interactant intactId="EBI-310569">
        <id>Q6VN20</id>
        <label>RANBP10</label>
    </interactant>
    <organismsDiffer>false</organismsDiffer>
    <experiments>3</experiments>
</comment>
<comment type="interaction">
    <interactant intactId="EBI-739552">
        <id>P43364</id>
    </interactant>
    <interactant intactId="EBI-745810">
        <id>Q96EN9</id>
        <label>REX1BD</label>
    </interactant>
    <organismsDiffer>false</organismsDiffer>
    <experiments>3</experiments>
</comment>
<comment type="interaction">
    <interactant intactId="EBI-739552">
        <id>P43364</id>
    </interactant>
    <interactant intactId="EBI-747035">
        <id>Q9H788</id>
        <label>SH2D4A</label>
    </interactant>
    <organismsDiffer>false</organismsDiffer>
    <experiments>2</experiments>
</comment>
<comment type="interaction">
    <interactant intactId="EBI-739552">
        <id>P43364</id>
    </interactant>
    <interactant intactId="EBI-12336127">
        <id>Q7Z614-3</id>
        <label>SNX20</label>
    </interactant>
    <organismsDiffer>false</organismsDiffer>
    <experiments>3</experiments>
</comment>
<comment type="interaction">
    <interactant intactId="EBI-739552">
        <id>P43364</id>
    </interactant>
    <interactant intactId="EBI-722932">
        <id>P49675</id>
        <label>STAR</label>
    </interactant>
    <organismsDiffer>false</organismsDiffer>
    <experiments>6</experiments>
</comment>
<comment type="interaction">
    <interactant intactId="EBI-739552">
        <id>P43364</id>
    </interactant>
    <interactant intactId="EBI-2269898">
        <id>Q9P2R7</id>
        <label>SUCLA2</label>
    </interactant>
    <organismsDiffer>false</organismsDiffer>
    <experiments>3</experiments>
</comment>
<comment type="interaction">
    <interactant intactId="EBI-739552">
        <id>P43364</id>
    </interactant>
    <interactant intactId="EBI-3921347">
        <id>P51687</id>
        <label>SUOX</label>
    </interactant>
    <organismsDiffer>false</organismsDiffer>
    <experiments>3</experiments>
</comment>
<comment type="interaction">
    <interactant intactId="EBI-739552">
        <id>P43364</id>
    </interactant>
    <interactant intactId="EBI-710310">
        <id>Q15560</id>
        <label>TCEA2</label>
    </interactant>
    <organismsDiffer>false</organismsDiffer>
    <experiments>5</experiments>
</comment>
<comment type="interaction">
    <interactant intactId="EBI-739552">
        <id>P43364</id>
    </interactant>
    <interactant intactId="EBI-745182">
        <id>Q9BQ70</id>
        <label>TCF25</label>
    </interactant>
    <organismsDiffer>false</organismsDiffer>
    <experiments>5</experiments>
</comment>
<comment type="interaction">
    <interactant intactId="EBI-739552">
        <id>P43364</id>
    </interactant>
    <interactant intactId="EBI-10818513">
        <id>Q8IYK2</id>
        <label>TEKTL1</label>
    </interactant>
    <organismsDiffer>false</organismsDiffer>
    <experiments>3</experiments>
</comment>
<comment type="interaction">
    <interactant intactId="EBI-739552">
        <id>P43364</id>
    </interactant>
    <interactant intactId="EBI-749248">
        <id>Q8N131</id>
        <label>TMEM123</label>
    </interactant>
    <organismsDiffer>false</organismsDiffer>
    <experiments>4</experiments>
</comment>
<comment type="interaction">
    <interactant intactId="EBI-739552">
        <id>P43364</id>
    </interactant>
    <interactant intactId="EBI-748900">
        <id>Q9NXH9</id>
        <label>TRMT1</label>
    </interactant>
    <organismsDiffer>false</organismsDiffer>
    <experiments>5</experiments>
</comment>
<comment type="interaction">
    <interactant intactId="EBI-739552">
        <id>P43364</id>
    </interactant>
    <interactant intactId="EBI-9379147">
        <id>Q7Z6J8</id>
        <label>UBE3D</label>
    </interactant>
    <organismsDiffer>false</organismsDiffer>
    <experiments>3</experiments>
</comment>
<comment type="interaction">
    <interactant intactId="EBI-739552">
        <id>P43364</id>
    </interactant>
    <interactant intactId="EBI-751647">
        <id>Q15007</id>
        <label>WTAP</label>
    </interactant>
    <organismsDiffer>false</organismsDiffer>
    <experiments>4</experiments>
</comment>
<comment type="interaction">
    <interactant intactId="EBI-10178634">
        <id>P43364-2</id>
    </interactant>
    <interactant intactId="EBI-749859">
        <id>Q8TDX5</id>
        <label>ACMSD</label>
    </interactant>
    <organismsDiffer>false</organismsDiffer>
    <experiments>3</experiments>
</comment>
<comment type="interaction">
    <interactant intactId="EBI-10178634">
        <id>P43364-2</id>
    </interactant>
    <interactant intactId="EBI-10178638">
        <id>I7GY12</id>
        <label>B9838V1</label>
    </interactant>
    <organismsDiffer>false</organismsDiffer>
    <experiments>3</experiments>
</comment>
<comment type="interaction">
    <interactant intactId="EBI-10178634">
        <id>P43364-2</id>
    </interactant>
    <interactant intactId="EBI-526406">
        <id>O43521</id>
        <label>BCL2L11</label>
    </interactant>
    <organismsDiffer>false</organismsDiffer>
    <experiments>3</experiments>
</comment>
<comment type="interaction">
    <interactant intactId="EBI-10178634">
        <id>P43364-2</id>
    </interactant>
    <interactant intactId="EBI-745073">
        <id>Q9BXY8</id>
        <label>BEX2</label>
    </interactant>
    <organismsDiffer>false</organismsDiffer>
    <experiments>3</experiments>
</comment>
<comment type="interaction">
    <interactant intactId="EBI-10178634">
        <id>P43364-2</id>
    </interactant>
    <interactant intactId="EBI-751035">
        <id>Q49A88</id>
        <label>CCDC14</label>
    </interactant>
    <organismsDiffer>false</organismsDiffer>
    <experiments>3</experiments>
</comment>
<comment type="interaction">
    <interactant intactId="EBI-10178634">
        <id>P43364-2</id>
    </interactant>
    <interactant intactId="EBI-10247802">
        <id>Q8IYE0-2</id>
        <label>CCDC146</label>
    </interactant>
    <organismsDiffer>false</organismsDiffer>
    <experiments>3</experiments>
</comment>
<comment type="interaction">
    <interactant intactId="EBI-10178634">
        <id>P43364-2</id>
    </interactant>
    <interactant intactId="EBI-10260504">
        <id>Q86Y33</id>
        <label>CDC20B</label>
    </interactant>
    <organismsDiffer>false</organismsDiffer>
    <experiments>3</experiments>
</comment>
<comment type="interaction">
    <interactant intactId="EBI-10178634">
        <id>P43364-2</id>
    </interactant>
    <interactant intactId="EBI-739780">
        <id>Q96AJ1</id>
        <label>CLUAP1</label>
    </interactant>
    <organismsDiffer>false</organismsDiffer>
    <experiments>3</experiments>
</comment>
<comment type="interaction">
    <interactant intactId="EBI-10178634">
        <id>P43364-2</id>
    </interactant>
    <interactant intactId="EBI-347804">
        <id>P68400</id>
        <label>CSNK2A1</label>
    </interactant>
    <organismsDiffer>false</organismsDiffer>
    <experiments>3</experiments>
</comment>
<comment type="interaction">
    <interactant intactId="EBI-10178634">
        <id>P43364-2</id>
    </interactant>
    <interactant intactId="EBI-10262451">
        <id>Q8IXB1-2</id>
        <label>DNAJC10</label>
    </interactant>
    <organismsDiffer>false</organismsDiffer>
    <experiments>3</experiments>
</comment>
<comment type="interaction">
    <interactant intactId="EBI-10178634">
        <id>P43364-2</id>
    </interactant>
    <interactant intactId="EBI-10282566">
        <id>Q96BY6-3</id>
        <label>DOCK10</label>
    </interactant>
    <organismsDiffer>false</organismsDiffer>
    <experiments>3</experiments>
</comment>
<comment type="interaction">
    <interactant intactId="EBI-10178634">
        <id>P43364-2</id>
    </interactant>
    <interactant intactId="EBI-10179508">
        <id>Q16206-2</id>
        <label>ENOX2</label>
    </interactant>
    <organismsDiffer>false</organismsDiffer>
    <experiments>3</experiments>
</comment>
<comment type="interaction">
    <interactant intactId="EBI-10178634">
        <id>P43364-2</id>
    </interactant>
    <interactant intactId="EBI-749356">
        <id>P46926</id>
        <label>GNPDA1</label>
    </interactant>
    <organismsDiffer>false</organismsDiffer>
    <experiments>3</experiments>
</comment>
<comment type="interaction">
    <interactant intactId="EBI-10178634">
        <id>P43364-2</id>
    </interactant>
    <interactant intactId="EBI-3893317">
        <id>P09067</id>
        <label>HOXB5</label>
    </interactant>
    <organismsDiffer>false</organismsDiffer>
    <experiments>3</experiments>
</comment>
<comment type="interaction">
    <interactant intactId="EBI-10178634">
        <id>P43364-2</id>
    </interactant>
    <interactant intactId="EBI-751694">
        <id>P20809</id>
        <label>IL11</label>
    </interactant>
    <organismsDiffer>false</organismsDiffer>
    <experiments>3</experiments>
</comment>
<comment type="interaction">
    <interactant intactId="EBI-10178634">
        <id>P43364-2</id>
    </interactant>
    <interactant intactId="EBI-10238517">
        <id>Q17RA0</id>
        <label>IL6ST</label>
    </interactant>
    <organismsDiffer>false</organismsDiffer>
    <experiments>3</experiments>
</comment>
<comment type="interaction">
    <interactant intactId="EBI-10178634">
        <id>P43364-2</id>
    </interactant>
    <interactant intactId="EBI-10278909">
        <id>Q92613</id>
        <label>JADE3</label>
    </interactant>
    <organismsDiffer>false</organismsDiffer>
    <experiments>3</experiments>
</comment>
<comment type="interaction">
    <interactant intactId="EBI-10178634">
        <id>P43364-2</id>
    </interactant>
    <interactant intactId="EBI-714236">
        <id>Q13330</id>
        <label>MTA1</label>
    </interactant>
    <organismsDiffer>false</organismsDiffer>
    <experiments>3</experiments>
</comment>
<comment type="interaction">
    <interactant intactId="EBI-10178634">
        <id>P43364-2</id>
    </interactant>
    <interactant intactId="EBI-713654">
        <id>Q9Y6M9</id>
        <label>NDUFB9</label>
    </interactant>
    <organismsDiffer>false</organismsDiffer>
    <experiments>3</experiments>
</comment>
<comment type="interaction">
    <interactant intactId="EBI-10178634">
        <id>P43364-2</id>
    </interactant>
    <interactant intactId="EBI-1391623">
        <id>P29474</id>
        <label>NOS3</label>
    </interactant>
    <organismsDiffer>false</organismsDiffer>
    <experiments>3</experiments>
</comment>
<comment type="interaction">
    <interactant intactId="EBI-10178634">
        <id>P43364-2</id>
    </interactant>
    <interactant intactId="EBI-741158">
        <id>Q96HA8</id>
        <label>NTAQ1</label>
    </interactant>
    <organismsDiffer>false</organismsDiffer>
    <experiments>3</experiments>
</comment>
<comment type="interaction">
    <interactant intactId="EBI-10178634">
        <id>P43364-2</id>
    </interactant>
    <interactant intactId="EBI-634289">
        <id>Q9H0N5</id>
        <label>PCBD2</label>
    </interactant>
    <organismsDiffer>false</organismsDiffer>
    <experiments>3</experiments>
</comment>
<comment type="interaction">
    <interactant intactId="EBI-10178634">
        <id>P43364-2</id>
    </interactant>
    <interactant intactId="EBI-714599">
        <id>Q9Y237</id>
        <label>PIN4</label>
    </interactant>
    <organismsDiffer>false</organismsDiffer>
    <experiments>3</experiments>
</comment>
<comment type="interaction">
    <interactant intactId="EBI-10178634">
        <id>P43364-2</id>
    </interactant>
    <interactant intactId="EBI-746368">
        <id>Q8N490</id>
        <label>PNKD</label>
    </interactant>
    <organismsDiffer>false</organismsDiffer>
    <experiments>3</experiments>
</comment>
<comment type="interaction">
    <interactant intactId="EBI-10178634">
        <id>P43364-2</id>
    </interactant>
    <interactant intactId="EBI-744267">
        <id>Q96JH8</id>
        <label>RADIL</label>
    </interactant>
    <organismsDiffer>false</organismsDiffer>
    <experiments>3</experiments>
</comment>
<comment type="interaction">
    <interactant intactId="EBI-10178634">
        <id>P43364-2</id>
    </interactant>
    <interactant intactId="EBI-780319">
        <id>Q86U06</id>
        <label>RBM23</label>
    </interactant>
    <organismsDiffer>false</organismsDiffer>
    <experiments>3</experiments>
</comment>
<comment type="interaction">
    <interactant intactId="EBI-10178634">
        <id>P43364-2</id>
    </interactant>
    <interactant intactId="EBI-10258579">
        <id>Q86U06-2</id>
        <label>RBM23</label>
    </interactant>
    <organismsDiffer>false</organismsDiffer>
    <experiments>3</experiments>
</comment>
<comment type="interaction">
    <interactant intactId="EBI-10178634">
        <id>P43364-2</id>
    </interactant>
    <interactant intactId="EBI-744896">
        <id>Q7Z614</id>
        <label>SNX20</label>
    </interactant>
    <organismsDiffer>false</organismsDiffer>
    <experiments>3</experiments>
</comment>
<comment type="interaction">
    <interactant intactId="EBI-10178634">
        <id>P43364-2</id>
    </interactant>
    <interactant intactId="EBI-722932">
        <id>P49675</id>
        <label>STAR</label>
    </interactant>
    <organismsDiffer>false</organismsDiffer>
    <experiments>3</experiments>
</comment>
<comment type="interaction">
    <interactant intactId="EBI-10178634">
        <id>P43364-2</id>
    </interactant>
    <interactant intactId="EBI-745182">
        <id>Q9BQ70</id>
        <label>TCF25</label>
    </interactant>
    <organismsDiffer>false</organismsDiffer>
    <experiments>3</experiments>
</comment>
<comment type="interaction">
    <interactant intactId="EBI-10178634">
        <id>P43364-2</id>
    </interactant>
    <interactant intactId="EBI-10264970">
        <id>Q8N1Q8</id>
        <label>THEM5</label>
    </interactant>
    <organismsDiffer>false</organismsDiffer>
    <experiments>3</experiments>
</comment>
<comment type="interaction">
    <interactant intactId="EBI-10178634">
        <id>P43364-2</id>
    </interactant>
    <interactant intactId="EBI-749248">
        <id>Q8N131</id>
        <label>TMEM123</label>
    </interactant>
    <organismsDiffer>false</organismsDiffer>
    <experiments>3</experiments>
</comment>
<comment type="interaction">
    <interactant intactId="EBI-10178634">
        <id>P43364-2</id>
    </interactant>
    <interactant intactId="EBI-10184033">
        <id>Q5VU62</id>
        <label>TPM3</label>
    </interactant>
    <organismsDiffer>false</organismsDiffer>
    <experiments>3</experiments>
</comment>
<comment type="interaction">
    <interactant intactId="EBI-10178634">
        <id>P43364-2</id>
    </interactant>
    <interactant intactId="EBI-748900">
        <id>Q9NXH9</id>
        <label>TRMT1</label>
    </interactant>
    <organismsDiffer>false</organismsDiffer>
    <experiments>3</experiments>
</comment>
<comment type="interaction">
    <interactant intactId="EBI-10178634">
        <id>P43364-2</id>
    </interactant>
    <interactant intactId="EBI-2932492">
        <id>Q99757</id>
        <label>TXN2</label>
    </interactant>
    <organismsDiffer>false</organismsDiffer>
    <experiments>3</experiments>
</comment>
<comment type="interaction">
    <interactant intactId="EBI-10178634">
        <id>P43364-2</id>
    </interactant>
    <interactant intactId="EBI-2511991">
        <id>Q9Y2K6</id>
        <label>USP20</label>
    </interactant>
    <organismsDiffer>false</organismsDiffer>
    <experiments>3</experiments>
</comment>
<comment type="interaction">
    <interactant intactId="EBI-10178634">
        <id>P43364-2</id>
    </interactant>
    <interactant intactId="EBI-747711">
        <id>Q68CQ4</id>
        <label>UTP25</label>
    </interactant>
    <organismsDiffer>false</organismsDiffer>
    <experiments>3</experiments>
</comment>
<comment type="interaction">
    <interactant intactId="EBI-10178634">
        <id>P43364-2</id>
    </interactant>
    <interactant intactId="EBI-748373">
        <id>Q6PEW1</id>
        <label>ZCCHC12</label>
    </interactant>
    <organismsDiffer>false</organismsDiffer>
    <experiments>3</experiments>
</comment>
<comment type="subcellular location">
    <subcellularLocation>
        <location evidence="3">Nucleus</location>
    </subcellularLocation>
    <subcellularLocation>
        <location evidence="3">Cytoplasm</location>
    </subcellularLocation>
</comment>
<comment type="alternative products">
    <event type="alternative splicing"/>
    <isoform>
        <id>P43364-1</id>
        <name>1</name>
        <sequence type="displayed"/>
    </isoform>
    <isoform>
        <id>P43364-2</id>
        <name>2</name>
        <sequence type="described" ref="VSP_018576"/>
    </isoform>
</comment>
<comment type="tissue specificity">
    <text evidence="3">Expressed in tumors of several types, such as melanoma, head and neck squamous cell carcinoma, lung carcinoma and breast carcinoma. Expressed in testis, ovary, prostate, cancerous prostate, breast and adrenal tissue.</text>
</comment>
<comment type="sequence caution" evidence="7">
    <conflict type="erroneous gene model prediction">
        <sequence resource="EMBL-CDS" id="AAA68870"/>
    </conflict>
</comment>
<protein>
    <recommendedName>
        <fullName>Melanoma-associated antigen 11</fullName>
    </recommendedName>
    <alternativeName>
        <fullName>Cancer/testis antigen 1.11</fullName>
        <shortName>CT1.11</shortName>
    </alternativeName>
    <alternativeName>
        <fullName>MAGE-11 antigen</fullName>
    </alternativeName>
</protein>